<reference key="1">
    <citation type="journal article" date="2006" name="Mol. Microbiol.">
        <title>Role of pathogenicity island-associated integrases in the genome plasticity of uropathogenic Escherichia coli strain 536.</title>
        <authorList>
            <person name="Hochhut B."/>
            <person name="Wilde C."/>
            <person name="Balling G."/>
            <person name="Middendorf B."/>
            <person name="Dobrindt U."/>
            <person name="Brzuszkiewicz E."/>
            <person name="Gottschalk G."/>
            <person name="Carniel E."/>
            <person name="Hacker J."/>
        </authorList>
    </citation>
    <scope>NUCLEOTIDE SEQUENCE [LARGE SCALE GENOMIC DNA]</scope>
    <source>
        <strain>536 / UPEC</strain>
    </source>
</reference>
<feature type="chain" id="PRO_1000087391" description="Glutathione-regulated potassium-efflux system protein KefC">
    <location>
        <begin position="1"/>
        <end position="620"/>
    </location>
</feature>
<feature type="transmembrane region" description="Helical" evidence="1">
    <location>
        <begin position="4"/>
        <end position="24"/>
    </location>
</feature>
<feature type="transmembrane region" description="Helical" evidence="1">
    <location>
        <begin position="26"/>
        <end position="46"/>
    </location>
</feature>
<feature type="transmembrane region" description="Helical" evidence="1">
    <location>
        <begin position="54"/>
        <end position="74"/>
    </location>
</feature>
<feature type="transmembrane region" description="Helical" evidence="1">
    <location>
        <begin position="90"/>
        <end position="110"/>
    </location>
</feature>
<feature type="transmembrane region" description="Helical" evidence="1">
    <location>
        <begin position="114"/>
        <end position="134"/>
    </location>
</feature>
<feature type="transmembrane region" description="Helical" evidence="1">
    <location>
        <begin position="149"/>
        <end position="169"/>
    </location>
</feature>
<feature type="transmembrane region" description="Helical" evidence="1">
    <location>
        <begin position="178"/>
        <end position="198"/>
    </location>
</feature>
<feature type="transmembrane region" description="Helical" evidence="1">
    <location>
        <begin position="218"/>
        <end position="238"/>
    </location>
</feature>
<feature type="transmembrane region" description="Helical" evidence="1">
    <location>
        <begin position="270"/>
        <end position="290"/>
    </location>
</feature>
<feature type="transmembrane region" description="Helical" evidence="1">
    <location>
        <begin position="294"/>
        <end position="314"/>
    </location>
</feature>
<feature type="transmembrane region" description="Helical" evidence="1">
    <location>
        <begin position="327"/>
        <end position="347"/>
    </location>
</feature>
<feature type="transmembrane region" description="Helical" evidence="1">
    <location>
        <begin position="359"/>
        <end position="379"/>
    </location>
</feature>
<feature type="domain" description="RCK N-terminal" evidence="2">
    <location>
        <begin position="399"/>
        <end position="518"/>
    </location>
</feature>
<feature type="region of interest" description="Disordered" evidence="3">
    <location>
        <begin position="597"/>
        <end position="620"/>
    </location>
</feature>
<gene>
    <name evidence="1" type="primary">kefC</name>
    <name type="ordered locus">ECP_0047</name>
</gene>
<name>KEFC_ECOL5</name>
<comment type="function">
    <text evidence="1">Pore-forming subunit of a potassium efflux system that confers protection against electrophiles. Catalyzes K(+)/H(+) antiport.</text>
</comment>
<comment type="subunit">
    <text evidence="1">Homodimer. Interacts with the regulatory subunit KefF.</text>
</comment>
<comment type="subcellular location">
    <subcellularLocation>
        <location evidence="1">Cell inner membrane</location>
        <topology evidence="1">Multi-pass membrane protein</topology>
    </subcellularLocation>
</comment>
<comment type="similarity">
    <text evidence="1">Belongs to the monovalent cation:proton antiporter 2 (CPA2) transporter (TC 2.A.37) family. KefC subfamily.</text>
</comment>
<accession>Q0TLU2</accession>
<evidence type="ECO:0000255" key="1">
    <source>
        <dbReference type="HAMAP-Rule" id="MF_01413"/>
    </source>
</evidence>
<evidence type="ECO:0000255" key="2">
    <source>
        <dbReference type="PROSITE-ProRule" id="PRU00543"/>
    </source>
</evidence>
<evidence type="ECO:0000256" key="3">
    <source>
        <dbReference type="SAM" id="MobiDB-lite"/>
    </source>
</evidence>
<sequence>MDSHTLIQALIYLGSAALIVPIAVRLGLGSVLGYLIAGCIIGPWGLRLVTDAESILHFAEIGVVLMLFIIGLELDPQRLWKLRAAVFGGGALQMVICGGLLGLFCMLLGLRWQVAELIGMTLALSSTAIAMQAMNERNLMVTQMGRSAFAVLLFQDIAAIPLVAMIPLLAASNASTTMGAFALSALKVAGALVLVVLLGRYVTRPALRFVARSGLREVFSAVALFLVFGFGLLLEEVGLSMAMGAFLAGVLLASSEYRHALESDIEPFKGLLLGLFFIGVGMSIDFGTLLENPLRIVILLLGFLIIKIAMLWLIARPLQVPNKQRRWFAVLLGQGSEFAFVVFGAAQMANVLEPEWAKSLTLAVALSMAATPILLVILNRLEQSSTEEAREADEIDEEQPRVIIAGFGRFGQITGRLLLSSGVKMVVLDHDPDHIETLRKFGMKVFYGDATRMDLLESAGAAKAEVLINAIDDPQTNLQLTEMVKEHFPHLQIIARARDVDHYIRLRQAGVEKPERETFEGALKTGRLALESLGLGPYEARERADVFRRFNIQMVEEMAMVENDTKARAAVYKRTSAMLSEIITEDREHLSLIQRHGWQGTEEGKHTGNMADEPETKPSS</sequence>
<proteinExistence type="inferred from homology"/>
<dbReference type="EMBL" id="CP000247">
    <property type="protein sequence ID" value="ABG68089.1"/>
    <property type="molecule type" value="Genomic_DNA"/>
</dbReference>
<dbReference type="RefSeq" id="WP_000377109.1">
    <property type="nucleotide sequence ID" value="NC_008253.1"/>
</dbReference>
<dbReference type="SMR" id="Q0TLU2"/>
<dbReference type="KEGG" id="ecp:ECP_0047"/>
<dbReference type="HOGENOM" id="CLU_005126_9_3_6"/>
<dbReference type="Proteomes" id="UP000009182">
    <property type="component" value="Chromosome"/>
</dbReference>
<dbReference type="GO" id="GO:0005886">
    <property type="term" value="C:plasma membrane"/>
    <property type="evidence" value="ECO:0007669"/>
    <property type="project" value="UniProtKB-SubCell"/>
</dbReference>
<dbReference type="GO" id="GO:0019899">
    <property type="term" value="F:enzyme binding"/>
    <property type="evidence" value="ECO:0007669"/>
    <property type="project" value="InterPro"/>
</dbReference>
<dbReference type="GO" id="GO:0015503">
    <property type="term" value="F:glutathione-regulated potassium exporter activity"/>
    <property type="evidence" value="ECO:0007669"/>
    <property type="project" value="UniProtKB-UniRule"/>
</dbReference>
<dbReference type="GO" id="GO:0015643">
    <property type="term" value="F:toxic substance binding"/>
    <property type="evidence" value="ECO:0007669"/>
    <property type="project" value="InterPro"/>
</dbReference>
<dbReference type="GO" id="GO:1902600">
    <property type="term" value="P:proton transmembrane transport"/>
    <property type="evidence" value="ECO:0007669"/>
    <property type="project" value="InterPro"/>
</dbReference>
<dbReference type="GO" id="GO:0051595">
    <property type="term" value="P:response to methylglyoxal"/>
    <property type="evidence" value="ECO:0007669"/>
    <property type="project" value="InterPro"/>
</dbReference>
<dbReference type="FunFam" id="1.20.1530.20:FF:000001">
    <property type="entry name" value="Glutathione-regulated potassium-efflux system protein KefB"/>
    <property type="match status" value="1"/>
</dbReference>
<dbReference type="FunFam" id="3.40.50.720:FF:000036">
    <property type="entry name" value="Glutathione-regulated potassium-efflux system protein KefB"/>
    <property type="match status" value="1"/>
</dbReference>
<dbReference type="Gene3D" id="1.20.1530.20">
    <property type="match status" value="1"/>
</dbReference>
<dbReference type="Gene3D" id="3.40.50.720">
    <property type="entry name" value="NAD(P)-binding Rossmann-like Domain"/>
    <property type="match status" value="1"/>
</dbReference>
<dbReference type="HAMAP" id="MF_01413">
    <property type="entry name" value="K_H_efflux_KefC"/>
    <property type="match status" value="1"/>
</dbReference>
<dbReference type="InterPro" id="IPR006153">
    <property type="entry name" value="Cation/H_exchanger_TM"/>
</dbReference>
<dbReference type="InterPro" id="IPR004771">
    <property type="entry name" value="K/H_exchanger"/>
</dbReference>
<dbReference type="InterPro" id="IPR023941">
    <property type="entry name" value="K_H_efflux_KefC"/>
</dbReference>
<dbReference type="InterPro" id="IPR006036">
    <property type="entry name" value="K_uptake_TrkA"/>
</dbReference>
<dbReference type="InterPro" id="IPR038770">
    <property type="entry name" value="Na+/solute_symporter_sf"/>
</dbReference>
<dbReference type="InterPro" id="IPR036291">
    <property type="entry name" value="NAD(P)-bd_dom_sf"/>
</dbReference>
<dbReference type="InterPro" id="IPR003148">
    <property type="entry name" value="RCK_N"/>
</dbReference>
<dbReference type="NCBIfam" id="TIGR00932">
    <property type="entry name" value="2a37"/>
    <property type="match status" value="1"/>
</dbReference>
<dbReference type="NCBIfam" id="NF002924">
    <property type="entry name" value="PRK03562.1"/>
    <property type="match status" value="1"/>
</dbReference>
<dbReference type="PANTHER" id="PTHR46157:SF3">
    <property type="entry name" value="GLUTATHIONE-REGULATED POTASSIUM-EFFLUX SYSTEM PROTEIN KEFC"/>
    <property type="match status" value="1"/>
</dbReference>
<dbReference type="PANTHER" id="PTHR46157">
    <property type="entry name" value="K(+) EFFLUX ANTIPORTER 3, CHLOROPLASTIC"/>
    <property type="match status" value="1"/>
</dbReference>
<dbReference type="Pfam" id="PF00999">
    <property type="entry name" value="Na_H_Exchanger"/>
    <property type="match status" value="1"/>
</dbReference>
<dbReference type="Pfam" id="PF02254">
    <property type="entry name" value="TrkA_N"/>
    <property type="match status" value="1"/>
</dbReference>
<dbReference type="PRINTS" id="PR00335">
    <property type="entry name" value="KUPTAKETRKA"/>
</dbReference>
<dbReference type="SUPFAM" id="SSF51735">
    <property type="entry name" value="NAD(P)-binding Rossmann-fold domains"/>
    <property type="match status" value="1"/>
</dbReference>
<dbReference type="PROSITE" id="PS51201">
    <property type="entry name" value="RCK_N"/>
    <property type="match status" value="1"/>
</dbReference>
<organism>
    <name type="scientific">Escherichia coli O6:K15:H31 (strain 536 / UPEC)</name>
    <dbReference type="NCBI Taxonomy" id="362663"/>
    <lineage>
        <taxon>Bacteria</taxon>
        <taxon>Pseudomonadati</taxon>
        <taxon>Pseudomonadota</taxon>
        <taxon>Gammaproteobacteria</taxon>
        <taxon>Enterobacterales</taxon>
        <taxon>Enterobacteriaceae</taxon>
        <taxon>Escherichia</taxon>
    </lineage>
</organism>
<protein>
    <recommendedName>
        <fullName evidence="1">Glutathione-regulated potassium-efflux system protein KefC</fullName>
    </recommendedName>
    <alternativeName>
        <fullName evidence="1">K(+)/H(+) antiporter</fullName>
    </alternativeName>
</protein>
<keyword id="KW-0050">Antiport</keyword>
<keyword id="KW-0997">Cell inner membrane</keyword>
<keyword id="KW-1003">Cell membrane</keyword>
<keyword id="KW-0406">Ion transport</keyword>
<keyword id="KW-0472">Membrane</keyword>
<keyword id="KW-0630">Potassium</keyword>
<keyword id="KW-0633">Potassium transport</keyword>
<keyword id="KW-0812">Transmembrane</keyword>
<keyword id="KW-1133">Transmembrane helix</keyword>
<keyword id="KW-0813">Transport</keyword>